<evidence type="ECO:0000255" key="1">
    <source>
        <dbReference type="HAMAP-Rule" id="MF_01341"/>
    </source>
</evidence>
<evidence type="ECO:0000256" key="2">
    <source>
        <dbReference type="SAM" id="MobiDB-lite"/>
    </source>
</evidence>
<evidence type="ECO:0000305" key="3"/>
<feature type="chain" id="PRO_1000142776" description="Large ribosomal subunit protein uL15">
    <location>
        <begin position="1"/>
        <end position="146"/>
    </location>
</feature>
<feature type="region of interest" description="Disordered" evidence="2">
    <location>
        <begin position="1"/>
        <end position="51"/>
    </location>
</feature>
<feature type="compositionally biased region" description="Basic and acidic residues" evidence="2">
    <location>
        <begin position="1"/>
        <end position="13"/>
    </location>
</feature>
<feature type="compositionally biased region" description="Gly residues" evidence="2">
    <location>
        <begin position="21"/>
        <end position="31"/>
    </location>
</feature>
<feature type="compositionally biased region" description="Gly residues" evidence="2">
    <location>
        <begin position="42"/>
        <end position="51"/>
    </location>
</feature>
<comment type="function">
    <text evidence="1">Binds to the 23S rRNA.</text>
</comment>
<comment type="subunit">
    <text evidence="1">Part of the 50S ribosomal subunit.</text>
</comment>
<comment type="similarity">
    <text evidence="1">Belongs to the universal ribosomal protein uL15 family.</text>
</comment>
<name>RL15_BACMK</name>
<accession>A9VP96</accession>
<dbReference type="EMBL" id="CP000903">
    <property type="protein sequence ID" value="ABY41393.1"/>
    <property type="molecule type" value="Genomic_DNA"/>
</dbReference>
<dbReference type="RefSeq" id="WP_002009754.1">
    <property type="nucleotide sequence ID" value="NZ_CAKMRX030000129.1"/>
</dbReference>
<dbReference type="SMR" id="A9VP96"/>
<dbReference type="GeneID" id="66264802"/>
<dbReference type="KEGG" id="bwe:BcerKBAB4_0124"/>
<dbReference type="eggNOG" id="COG0200">
    <property type="taxonomic scope" value="Bacteria"/>
</dbReference>
<dbReference type="HOGENOM" id="CLU_055188_4_2_9"/>
<dbReference type="Proteomes" id="UP000002154">
    <property type="component" value="Chromosome"/>
</dbReference>
<dbReference type="GO" id="GO:0022625">
    <property type="term" value="C:cytosolic large ribosomal subunit"/>
    <property type="evidence" value="ECO:0007669"/>
    <property type="project" value="TreeGrafter"/>
</dbReference>
<dbReference type="GO" id="GO:0019843">
    <property type="term" value="F:rRNA binding"/>
    <property type="evidence" value="ECO:0007669"/>
    <property type="project" value="UniProtKB-UniRule"/>
</dbReference>
<dbReference type="GO" id="GO:0003735">
    <property type="term" value="F:structural constituent of ribosome"/>
    <property type="evidence" value="ECO:0007669"/>
    <property type="project" value="InterPro"/>
</dbReference>
<dbReference type="GO" id="GO:0006412">
    <property type="term" value="P:translation"/>
    <property type="evidence" value="ECO:0007669"/>
    <property type="project" value="UniProtKB-UniRule"/>
</dbReference>
<dbReference type="FunFam" id="3.100.10.10:FF:000004">
    <property type="entry name" value="50S ribosomal protein L15"/>
    <property type="match status" value="1"/>
</dbReference>
<dbReference type="Gene3D" id="3.100.10.10">
    <property type="match status" value="1"/>
</dbReference>
<dbReference type="HAMAP" id="MF_01341">
    <property type="entry name" value="Ribosomal_uL15"/>
    <property type="match status" value="1"/>
</dbReference>
<dbReference type="InterPro" id="IPR030878">
    <property type="entry name" value="Ribosomal_uL15"/>
</dbReference>
<dbReference type="InterPro" id="IPR021131">
    <property type="entry name" value="Ribosomal_uL15/eL18"/>
</dbReference>
<dbReference type="InterPro" id="IPR036227">
    <property type="entry name" value="Ribosomal_uL15/eL18_sf"/>
</dbReference>
<dbReference type="InterPro" id="IPR005749">
    <property type="entry name" value="Ribosomal_uL15_bac-type"/>
</dbReference>
<dbReference type="InterPro" id="IPR001196">
    <property type="entry name" value="Ribosomal_uL15_CS"/>
</dbReference>
<dbReference type="NCBIfam" id="TIGR01071">
    <property type="entry name" value="rplO_bact"/>
    <property type="match status" value="1"/>
</dbReference>
<dbReference type="PANTHER" id="PTHR12934">
    <property type="entry name" value="50S RIBOSOMAL PROTEIN L15"/>
    <property type="match status" value="1"/>
</dbReference>
<dbReference type="PANTHER" id="PTHR12934:SF11">
    <property type="entry name" value="LARGE RIBOSOMAL SUBUNIT PROTEIN UL15M"/>
    <property type="match status" value="1"/>
</dbReference>
<dbReference type="Pfam" id="PF00828">
    <property type="entry name" value="Ribosomal_L27A"/>
    <property type="match status" value="1"/>
</dbReference>
<dbReference type="SUPFAM" id="SSF52080">
    <property type="entry name" value="Ribosomal proteins L15p and L18e"/>
    <property type="match status" value="1"/>
</dbReference>
<dbReference type="PROSITE" id="PS00475">
    <property type="entry name" value="RIBOSOMAL_L15"/>
    <property type="match status" value="1"/>
</dbReference>
<organism>
    <name type="scientific">Bacillus mycoides (strain KBAB4)</name>
    <name type="common">Bacillus weihenstephanensis</name>
    <dbReference type="NCBI Taxonomy" id="315730"/>
    <lineage>
        <taxon>Bacteria</taxon>
        <taxon>Bacillati</taxon>
        <taxon>Bacillota</taxon>
        <taxon>Bacilli</taxon>
        <taxon>Bacillales</taxon>
        <taxon>Bacillaceae</taxon>
        <taxon>Bacillus</taxon>
        <taxon>Bacillus cereus group</taxon>
    </lineage>
</organism>
<protein>
    <recommendedName>
        <fullName evidence="1">Large ribosomal subunit protein uL15</fullName>
    </recommendedName>
    <alternativeName>
        <fullName evidence="3">50S ribosomal protein L15</fullName>
    </alternativeName>
</protein>
<sequence length="146" mass="15550">MKLHELKPAEGSRKVRNRVGRGIGSGNGKTAGRGHKGQNARSGGGVRLGFEGGQTPLFRRLPKRGFTNINRKEFTIVNLSTLNRFEDGTEVTPELLLETGVISKLNDGVKILASGAVEKKLTVKAHKFSSSAKEAIEAAGGSVEVI</sequence>
<proteinExistence type="inferred from homology"/>
<keyword id="KW-0687">Ribonucleoprotein</keyword>
<keyword id="KW-0689">Ribosomal protein</keyword>
<keyword id="KW-0694">RNA-binding</keyword>
<keyword id="KW-0699">rRNA-binding</keyword>
<reference key="1">
    <citation type="journal article" date="2008" name="Chem. Biol. Interact.">
        <title>Extending the Bacillus cereus group genomics to putative food-borne pathogens of different toxicity.</title>
        <authorList>
            <person name="Lapidus A."/>
            <person name="Goltsman E."/>
            <person name="Auger S."/>
            <person name="Galleron N."/>
            <person name="Segurens B."/>
            <person name="Dossat C."/>
            <person name="Land M.L."/>
            <person name="Broussolle V."/>
            <person name="Brillard J."/>
            <person name="Guinebretiere M.-H."/>
            <person name="Sanchis V."/>
            <person name="Nguen-the C."/>
            <person name="Lereclus D."/>
            <person name="Richardson P."/>
            <person name="Wincker P."/>
            <person name="Weissenbach J."/>
            <person name="Ehrlich S.D."/>
            <person name="Sorokin A."/>
        </authorList>
    </citation>
    <scope>NUCLEOTIDE SEQUENCE [LARGE SCALE GENOMIC DNA]</scope>
    <source>
        <strain>KBAB4</strain>
    </source>
</reference>
<gene>
    <name evidence="1" type="primary">rplO</name>
    <name type="ordered locus">BcerKBAB4_0124</name>
</gene>